<reference key="1">
    <citation type="journal article" date="1998" name="J. Biochem.">
        <title>Zep: A novel zinc finger protein containing a large proline-rich domain.</title>
        <authorList>
            <person name="Taguchi E."/>
            <person name="Muramatsu H."/>
            <person name="Fan Q.W."/>
            <person name="Kurosawa N."/>
            <person name="Sobue G."/>
            <person name="Muramatsu T."/>
        </authorList>
    </citation>
    <scope>NUCLEOTIDE SEQUENCE [MRNA] (ISOFORM 4)</scope>
    <scope>SUBCELLULAR LOCATION</scope>
    <scope>TISSUE SPECIFICITY</scope>
    <source>
        <tissue>Brain</tissue>
    </source>
</reference>
<reference key="2">
    <citation type="submission" date="1999-09" db="EMBL/GenBank/DDBJ databases">
        <title>Mouse zinc finger transcription factor (ZNF207) mRNA, complete cds.</title>
        <authorList>
            <person name="Misawa K."/>
            <person name="Kitamura T."/>
            <person name="Nosaka T."/>
        </authorList>
    </citation>
    <scope>NUCLEOTIDE SEQUENCE [MRNA] (ISOFORM 1)</scope>
</reference>
<reference key="3">
    <citation type="journal article" date="2005" name="Science">
        <title>The transcriptional landscape of the mammalian genome.</title>
        <authorList>
            <person name="Carninci P."/>
            <person name="Kasukawa T."/>
            <person name="Katayama S."/>
            <person name="Gough J."/>
            <person name="Frith M.C."/>
            <person name="Maeda N."/>
            <person name="Oyama R."/>
            <person name="Ravasi T."/>
            <person name="Lenhard B."/>
            <person name="Wells C."/>
            <person name="Kodzius R."/>
            <person name="Shimokawa K."/>
            <person name="Bajic V.B."/>
            <person name="Brenner S.E."/>
            <person name="Batalov S."/>
            <person name="Forrest A.R."/>
            <person name="Zavolan M."/>
            <person name="Davis M.J."/>
            <person name="Wilming L.G."/>
            <person name="Aidinis V."/>
            <person name="Allen J.E."/>
            <person name="Ambesi-Impiombato A."/>
            <person name="Apweiler R."/>
            <person name="Aturaliya R.N."/>
            <person name="Bailey T.L."/>
            <person name="Bansal M."/>
            <person name="Baxter L."/>
            <person name="Beisel K.W."/>
            <person name="Bersano T."/>
            <person name="Bono H."/>
            <person name="Chalk A.M."/>
            <person name="Chiu K.P."/>
            <person name="Choudhary V."/>
            <person name="Christoffels A."/>
            <person name="Clutterbuck D.R."/>
            <person name="Crowe M.L."/>
            <person name="Dalla E."/>
            <person name="Dalrymple B.P."/>
            <person name="de Bono B."/>
            <person name="Della Gatta G."/>
            <person name="di Bernardo D."/>
            <person name="Down T."/>
            <person name="Engstrom P."/>
            <person name="Fagiolini M."/>
            <person name="Faulkner G."/>
            <person name="Fletcher C.F."/>
            <person name="Fukushima T."/>
            <person name="Furuno M."/>
            <person name="Futaki S."/>
            <person name="Gariboldi M."/>
            <person name="Georgii-Hemming P."/>
            <person name="Gingeras T.R."/>
            <person name="Gojobori T."/>
            <person name="Green R.E."/>
            <person name="Gustincich S."/>
            <person name="Harbers M."/>
            <person name="Hayashi Y."/>
            <person name="Hensch T.K."/>
            <person name="Hirokawa N."/>
            <person name="Hill D."/>
            <person name="Huminiecki L."/>
            <person name="Iacono M."/>
            <person name="Ikeo K."/>
            <person name="Iwama A."/>
            <person name="Ishikawa T."/>
            <person name="Jakt M."/>
            <person name="Kanapin A."/>
            <person name="Katoh M."/>
            <person name="Kawasawa Y."/>
            <person name="Kelso J."/>
            <person name="Kitamura H."/>
            <person name="Kitano H."/>
            <person name="Kollias G."/>
            <person name="Krishnan S.P."/>
            <person name="Kruger A."/>
            <person name="Kummerfeld S.K."/>
            <person name="Kurochkin I.V."/>
            <person name="Lareau L.F."/>
            <person name="Lazarevic D."/>
            <person name="Lipovich L."/>
            <person name="Liu J."/>
            <person name="Liuni S."/>
            <person name="McWilliam S."/>
            <person name="Madan Babu M."/>
            <person name="Madera M."/>
            <person name="Marchionni L."/>
            <person name="Matsuda H."/>
            <person name="Matsuzawa S."/>
            <person name="Miki H."/>
            <person name="Mignone F."/>
            <person name="Miyake S."/>
            <person name="Morris K."/>
            <person name="Mottagui-Tabar S."/>
            <person name="Mulder N."/>
            <person name="Nakano N."/>
            <person name="Nakauchi H."/>
            <person name="Ng P."/>
            <person name="Nilsson R."/>
            <person name="Nishiguchi S."/>
            <person name="Nishikawa S."/>
            <person name="Nori F."/>
            <person name="Ohara O."/>
            <person name="Okazaki Y."/>
            <person name="Orlando V."/>
            <person name="Pang K.C."/>
            <person name="Pavan W.J."/>
            <person name="Pavesi G."/>
            <person name="Pesole G."/>
            <person name="Petrovsky N."/>
            <person name="Piazza S."/>
            <person name="Reed J."/>
            <person name="Reid J.F."/>
            <person name="Ring B.Z."/>
            <person name="Ringwald M."/>
            <person name="Rost B."/>
            <person name="Ruan Y."/>
            <person name="Salzberg S.L."/>
            <person name="Sandelin A."/>
            <person name="Schneider C."/>
            <person name="Schoenbach C."/>
            <person name="Sekiguchi K."/>
            <person name="Semple C.A."/>
            <person name="Seno S."/>
            <person name="Sessa L."/>
            <person name="Sheng Y."/>
            <person name="Shibata Y."/>
            <person name="Shimada H."/>
            <person name="Shimada K."/>
            <person name="Silva D."/>
            <person name="Sinclair B."/>
            <person name="Sperling S."/>
            <person name="Stupka E."/>
            <person name="Sugiura K."/>
            <person name="Sultana R."/>
            <person name="Takenaka Y."/>
            <person name="Taki K."/>
            <person name="Tammoja K."/>
            <person name="Tan S.L."/>
            <person name="Tang S."/>
            <person name="Taylor M.S."/>
            <person name="Tegner J."/>
            <person name="Teichmann S.A."/>
            <person name="Ueda H.R."/>
            <person name="van Nimwegen E."/>
            <person name="Verardo R."/>
            <person name="Wei C.L."/>
            <person name="Yagi K."/>
            <person name="Yamanishi H."/>
            <person name="Zabarovsky E."/>
            <person name="Zhu S."/>
            <person name="Zimmer A."/>
            <person name="Hide W."/>
            <person name="Bult C."/>
            <person name="Grimmond S.M."/>
            <person name="Teasdale R.D."/>
            <person name="Liu E.T."/>
            <person name="Brusic V."/>
            <person name="Quackenbush J."/>
            <person name="Wahlestedt C."/>
            <person name="Mattick J.S."/>
            <person name="Hume D.A."/>
            <person name="Kai C."/>
            <person name="Sasaki D."/>
            <person name="Tomaru Y."/>
            <person name="Fukuda S."/>
            <person name="Kanamori-Katayama M."/>
            <person name="Suzuki M."/>
            <person name="Aoki J."/>
            <person name="Arakawa T."/>
            <person name="Iida J."/>
            <person name="Imamura K."/>
            <person name="Itoh M."/>
            <person name="Kato T."/>
            <person name="Kawaji H."/>
            <person name="Kawagashira N."/>
            <person name="Kawashima T."/>
            <person name="Kojima M."/>
            <person name="Kondo S."/>
            <person name="Konno H."/>
            <person name="Nakano K."/>
            <person name="Ninomiya N."/>
            <person name="Nishio T."/>
            <person name="Okada M."/>
            <person name="Plessy C."/>
            <person name="Shibata K."/>
            <person name="Shiraki T."/>
            <person name="Suzuki S."/>
            <person name="Tagami M."/>
            <person name="Waki K."/>
            <person name="Watahiki A."/>
            <person name="Okamura-Oho Y."/>
            <person name="Suzuki H."/>
            <person name="Kawai J."/>
            <person name="Hayashizaki Y."/>
        </authorList>
    </citation>
    <scope>NUCLEOTIDE SEQUENCE [LARGE SCALE MRNA] (ISOFORMS 1 AND 3)</scope>
    <source>
        <strain>C57BL/6J</strain>
        <tissue>Kidney</tissue>
    </source>
</reference>
<reference key="4">
    <citation type="journal article" date="2009" name="PLoS Biol.">
        <title>Lineage-specific biology revealed by a finished genome assembly of the mouse.</title>
        <authorList>
            <person name="Church D.M."/>
            <person name="Goodstadt L."/>
            <person name="Hillier L.W."/>
            <person name="Zody M.C."/>
            <person name="Goldstein S."/>
            <person name="She X."/>
            <person name="Bult C.J."/>
            <person name="Agarwala R."/>
            <person name="Cherry J.L."/>
            <person name="DiCuccio M."/>
            <person name="Hlavina W."/>
            <person name="Kapustin Y."/>
            <person name="Meric P."/>
            <person name="Maglott D."/>
            <person name="Birtle Z."/>
            <person name="Marques A.C."/>
            <person name="Graves T."/>
            <person name="Zhou S."/>
            <person name="Teague B."/>
            <person name="Potamousis K."/>
            <person name="Churas C."/>
            <person name="Place M."/>
            <person name="Herschleb J."/>
            <person name="Runnheim R."/>
            <person name="Forrest D."/>
            <person name="Amos-Landgraf J."/>
            <person name="Schwartz D.C."/>
            <person name="Cheng Z."/>
            <person name="Lindblad-Toh K."/>
            <person name="Eichler E.E."/>
            <person name="Ponting C.P."/>
        </authorList>
    </citation>
    <scope>NUCLEOTIDE SEQUENCE [LARGE SCALE GENOMIC DNA]</scope>
    <source>
        <strain>C57BL/6J</strain>
    </source>
</reference>
<reference key="5">
    <citation type="submission" date="2005-07" db="EMBL/GenBank/DDBJ databases">
        <authorList>
            <person name="Mural R.J."/>
            <person name="Adams M.D."/>
            <person name="Myers E.W."/>
            <person name="Smith H.O."/>
            <person name="Venter J.C."/>
        </authorList>
    </citation>
    <scope>NUCLEOTIDE SEQUENCE [LARGE SCALE GENOMIC DNA]</scope>
</reference>
<reference key="6">
    <citation type="journal article" date="2004" name="Genome Res.">
        <title>The status, quality, and expansion of the NIH full-length cDNA project: the Mammalian Gene Collection (MGC).</title>
        <authorList>
            <consortium name="The MGC Project Team"/>
        </authorList>
    </citation>
    <scope>NUCLEOTIDE SEQUENCE [LARGE SCALE MRNA] (ISOFORM 3)</scope>
    <source>
        <strain>FVB/N</strain>
        <tissue>Mammary tumor</tissue>
    </source>
</reference>
<reference key="7">
    <citation type="journal article" date="2010" name="Cell">
        <title>A tissue-specific atlas of mouse protein phosphorylation and expression.</title>
        <authorList>
            <person name="Huttlin E.L."/>
            <person name="Jedrychowski M.P."/>
            <person name="Elias J.E."/>
            <person name="Goswami T."/>
            <person name="Rad R."/>
            <person name="Beausoleil S.A."/>
            <person name="Villen J."/>
            <person name="Haas W."/>
            <person name="Sowa M.E."/>
            <person name="Gygi S.P."/>
        </authorList>
    </citation>
    <scope>IDENTIFICATION BY MASS SPECTROMETRY [LARGE SCALE ANALYSIS]</scope>
    <source>
        <tissue>Heart</tissue>
        <tissue>Kidney</tissue>
        <tissue>Lung</tissue>
        <tissue>Spleen</tissue>
        <tissue>Testis</tissue>
    </source>
</reference>
<reference key="8">
    <citation type="journal article" date="2015" name="Cell">
        <title>Phase transition of spindle-associated protein regulate spindle apparatus assembly.</title>
        <authorList>
            <person name="Jiang H."/>
            <person name="Wang S."/>
            <person name="Huang Y."/>
            <person name="He X."/>
            <person name="Cui H."/>
            <person name="Zhu X."/>
            <person name="Zheng Y."/>
        </authorList>
    </citation>
    <scope>FUNCTION</scope>
    <scope>DOMAIN</scope>
    <scope>INTERACTION WITH BUB3</scope>
    <scope>MUTAGENESIS OF 391-GLU-GLU-392</scope>
</reference>
<evidence type="ECO:0000250" key="1">
    <source>
        <dbReference type="UniProtKB" id="O43670"/>
    </source>
</evidence>
<evidence type="ECO:0000256" key="2">
    <source>
        <dbReference type="SAM" id="MobiDB-lite"/>
    </source>
</evidence>
<evidence type="ECO:0000269" key="3">
    <source>
    </source>
</evidence>
<evidence type="ECO:0000269" key="4">
    <source>
    </source>
</evidence>
<evidence type="ECO:0000303" key="5">
    <source>
    </source>
</evidence>
<evidence type="ECO:0000303" key="6">
    <source>
    </source>
</evidence>
<evidence type="ECO:0000303" key="7">
    <source>
    </source>
</evidence>
<evidence type="ECO:0000305" key="8"/>
<evidence type="ECO:0000312" key="9">
    <source>
        <dbReference type="MGI" id="MGI:1340045"/>
    </source>
</evidence>
<keyword id="KW-0025">Alternative splicing</keyword>
<keyword id="KW-0131">Cell cycle</keyword>
<keyword id="KW-0132">Cell division</keyword>
<keyword id="KW-0137">Centromere</keyword>
<keyword id="KW-0158">Chromosome</keyword>
<keyword id="KW-0159">Chromosome partition</keyword>
<keyword id="KW-0963">Cytoplasm</keyword>
<keyword id="KW-0206">Cytoskeleton</keyword>
<keyword id="KW-0995">Kinetochore</keyword>
<keyword id="KW-0479">Metal-binding</keyword>
<keyword id="KW-0493">Microtubule</keyword>
<keyword id="KW-0498">Mitosis</keyword>
<keyword id="KW-0539">Nucleus</keyword>
<keyword id="KW-1185">Reference proteome</keyword>
<keyword id="KW-0677">Repeat</keyword>
<keyword id="KW-0862">Zinc</keyword>
<keyword id="KW-0863">Zinc-finger</keyword>
<accession>Q9JMD0</accession>
<accession>E9PW12</accession>
<accession>Q99LA2</accession>
<accession>Q9Z326</accession>
<comment type="function">
    <text evidence="1 3">Kinetochore- and microtubule-binding protein that plays a key role in spindle assembly. ZNF207/BuGZ is mainly composed of disordered low-complexity regions and undergoes phase transition or coacervation to form temperature-dependent liquid droplets. Coacervation promotes microtubule bundling and concentrates tubulin, promoting microtubule polymerization and assembly of spindle and spindle matrix by concentrating its building blocks (PubMed:26388440). Also acts as a regulator of mitotic chromosome alignment by mediating the stability and kinetochore loading of BUB3. Mechanisms by which BUB3 is protected are unclear: according to a first report, ZNF207/BuGZ may act by blocking ubiquitination and proteasomal degradation of BUB3. According to another report, the stabilization is independent of the proteasome (By similarity).</text>
</comment>
<comment type="subunit">
    <text evidence="3">Interacts (via GLEBS region) with BUB3.</text>
</comment>
<comment type="subcellular location">
    <subcellularLocation>
        <location evidence="4">Nucleus</location>
    </subcellularLocation>
    <subcellularLocation>
        <location evidence="1">Chromosome</location>
        <location evidence="1">Centromere</location>
        <location evidence="1">Kinetochore</location>
    </subcellularLocation>
    <subcellularLocation>
        <location evidence="1">Cytoplasm</location>
        <location evidence="1">Cytoskeleton</location>
        <location evidence="1">Spindle</location>
    </subcellularLocation>
    <text evidence="1">Localizes primarily to the nucleus in interphase, concentrates at kinetochores prior to nuclear envelope breakdown and during early prometaphase, and disappears from kinetochores upon microtubule-binding.</text>
</comment>
<comment type="alternative products">
    <event type="alternative splicing"/>
    <isoform>
        <id>Q9JMD0-1</id>
        <name>1</name>
        <sequence type="displayed"/>
    </isoform>
    <isoform>
        <id>Q9JMD0-2</id>
        <name>2</name>
        <sequence type="described" ref="VSP_054255"/>
    </isoform>
    <isoform>
        <id>Q9JMD0-3</id>
        <name>3</name>
        <sequence type="described" ref="VSP_054257"/>
    </isoform>
    <isoform>
        <id>Q9JMD0-4</id>
        <name>4</name>
        <sequence type="described" ref="VSP_054256 VSP_054257"/>
    </isoform>
</comment>
<comment type="tissue specificity">
    <text evidence="4">In day-13 embryo, strongly expressed in the nervous system (brain, spinal cord and dorsal root ganglia), with strong to weak expression in other regions. Continues to be strongly expressed in the neonatal brain while expression is weak in the brain and spinal cord of adult.</text>
</comment>
<comment type="domain">
    <text evidence="3">Mainly composed of disordered low-complexity regions outside of the C2H2-type zinc fingers. Coacervation depends on hydrophobic and aromatic Phe and Tyr in the disordered low-complexity region, that may promote coacervation by forming intermolecular hydrophobic interactions.</text>
</comment>
<comment type="domain">
    <text evidence="1">The GLEBS region mediates interaction with BUB3.</text>
</comment>
<comment type="domain">
    <text evidence="1">The microtubule-binding region is required for efficient loading of BUB3 onto kinetochores and proper mitosis.</text>
</comment>
<sequence length="495" mass="52793">MGRKKKKQLKPWCWYCNRDFDDEKILIQHQKAKHFKCHICHKKLYTGPGLAIHCMQVHKETIDAVPNAIPGRTDIELEIYGMEGIPEKDMDERRRLLEQKTQESQKKKQQDDSDEYDDDESAASTSFQPQPVQPQQGYIPPMAQPGLPPVPGAPGMPPGIPPLMPGVPPLMPGMPPVMPGMPPGLHHQRKYTQSFCGENIMMPMGGMMPPGPGIPPLMPGMPPGMPPPVPRPGIPPMTQAQAVSAPGILNRPPAPTAAVPAPQPPVTKPLFPSAGQMGTPVTSSSTASSNSESLSASSKALFPSTAQAQAAVQGPVGTDFKPLNSTPAATTTEPPKPTFPAYTQSTASTTSTTNSTAAKPAASITSKPATLTTTSATSKLIHPDEDISLEERRAQLPKYQRNLPRPGQTPIGNPPVGPIGGMMPPQPGLPQQQAMRPPMPPHGQYGGHHQGMPGYLPGAMPPYGQGPPMVPPYQGGPPRPPMGMRPPVMSQGGRY</sequence>
<gene>
    <name evidence="1" type="primary">Znf207</name>
    <name evidence="1" type="synonym">Bugz</name>
    <name evidence="7" type="synonym">Zep</name>
    <name evidence="9" type="synonym">Zfp207</name>
</gene>
<protein>
    <recommendedName>
        <fullName evidence="1">BUB3-interacting and GLEBS motif-containing protein ZNF207</fullName>
        <shortName evidence="1">BuGZ</shortName>
    </recommendedName>
    <alternativeName>
        <fullName>49 kDa zinc finger protein</fullName>
    </alternativeName>
    <alternativeName>
        <fullName evidence="1">Zinc finger protein 207</fullName>
    </alternativeName>
</protein>
<dbReference type="EMBL" id="AB013357">
    <property type="protein sequence ID" value="BAA37094.1"/>
    <property type="molecule type" value="mRNA"/>
</dbReference>
<dbReference type="EMBL" id="AB032196">
    <property type="protein sequence ID" value="BAA92375.1"/>
    <property type="molecule type" value="mRNA"/>
</dbReference>
<dbReference type="EMBL" id="AK087885">
    <property type="protein sequence ID" value="BAC40034.1"/>
    <property type="molecule type" value="mRNA"/>
</dbReference>
<dbReference type="EMBL" id="AK146787">
    <property type="protein sequence ID" value="BAE27431.1"/>
    <property type="molecule type" value="mRNA"/>
</dbReference>
<dbReference type="EMBL" id="AK159683">
    <property type="protein sequence ID" value="BAE35286.1"/>
    <property type="molecule type" value="mRNA"/>
</dbReference>
<dbReference type="EMBL" id="AL591146">
    <property type="status" value="NOT_ANNOTATED_CDS"/>
    <property type="molecule type" value="Genomic_DNA"/>
</dbReference>
<dbReference type="EMBL" id="CH466556">
    <property type="protein sequence ID" value="EDL15636.1"/>
    <property type="molecule type" value="Genomic_DNA"/>
</dbReference>
<dbReference type="EMBL" id="CH466556">
    <property type="protein sequence ID" value="EDL15638.1"/>
    <property type="molecule type" value="Genomic_DNA"/>
</dbReference>
<dbReference type="EMBL" id="BC003715">
    <property type="protein sequence ID" value="AAH03715.1"/>
    <property type="molecule type" value="mRNA"/>
</dbReference>
<dbReference type="CCDS" id="CCDS48863.1">
    <molecule id="Q9JMD0-1"/>
</dbReference>
<dbReference type="CCDS" id="CCDS48864.1">
    <molecule id="Q9JMD0-3"/>
</dbReference>
<dbReference type="CCDS" id="CCDS48865.1">
    <molecule id="Q9JMD0-2"/>
</dbReference>
<dbReference type="PIR" id="JE0367">
    <property type="entry name" value="JE0367"/>
</dbReference>
<dbReference type="RefSeq" id="NP_001123641.1">
    <molecule id="Q9JMD0-1"/>
    <property type="nucleotide sequence ID" value="NM_001130169.1"/>
</dbReference>
<dbReference type="RefSeq" id="NP_001123642.1">
    <molecule id="Q9JMD0-2"/>
    <property type="nucleotide sequence ID" value="NM_001130170.1"/>
</dbReference>
<dbReference type="RefSeq" id="NP_001123643.1">
    <molecule id="Q9JMD0-3"/>
    <property type="nucleotide sequence ID" value="NM_001130171.1"/>
</dbReference>
<dbReference type="RefSeq" id="NP_035881.1">
    <molecule id="Q9JMD0-4"/>
    <property type="nucleotide sequence ID" value="NM_011751.3"/>
</dbReference>
<dbReference type="RefSeq" id="XP_006533252.1">
    <molecule id="Q9JMD0-1"/>
    <property type="nucleotide sequence ID" value="XM_006533189.2"/>
</dbReference>
<dbReference type="SMR" id="Q9JMD0"/>
<dbReference type="BioGRID" id="204648">
    <property type="interactions" value="14"/>
</dbReference>
<dbReference type="FunCoup" id="Q9JMD0">
    <property type="interactions" value="3972"/>
</dbReference>
<dbReference type="IntAct" id="Q9JMD0">
    <property type="interactions" value="1"/>
</dbReference>
<dbReference type="STRING" id="10090.ENSMUSP00000054168"/>
<dbReference type="GlyGen" id="Q9JMD0">
    <property type="glycosylation" value="13 sites, 1 N-linked glycan (1 site), 1 O-linked glycan (11 sites)"/>
</dbReference>
<dbReference type="iPTMnet" id="Q9JMD0"/>
<dbReference type="PhosphoSitePlus" id="Q9JMD0"/>
<dbReference type="SwissPalm" id="Q9JMD0"/>
<dbReference type="PaxDb" id="10090-ENSMUSP00000054168"/>
<dbReference type="PeptideAtlas" id="Q9JMD0"/>
<dbReference type="ProteomicsDB" id="299570">
    <molecule id="Q9JMD0-1"/>
</dbReference>
<dbReference type="ProteomicsDB" id="299571">
    <molecule id="Q9JMD0-2"/>
</dbReference>
<dbReference type="ProteomicsDB" id="299572">
    <molecule id="Q9JMD0-3"/>
</dbReference>
<dbReference type="ProteomicsDB" id="299573">
    <molecule id="Q9JMD0-4"/>
</dbReference>
<dbReference type="Pumba" id="Q9JMD0"/>
<dbReference type="Antibodypedia" id="1741">
    <property type="antibodies" value="331 antibodies from 25 providers"/>
</dbReference>
<dbReference type="DNASU" id="22680"/>
<dbReference type="Ensembl" id="ENSMUST00000017567.14">
    <molecule id="Q9JMD0-3"/>
    <property type="protein sequence ID" value="ENSMUSP00000017567.7"/>
    <property type="gene ID" value="ENSMUSG00000017421.19"/>
</dbReference>
<dbReference type="Ensembl" id="ENSMUST00000053740.15">
    <molecule id="Q9JMD0-1"/>
    <property type="protein sequence ID" value="ENSMUSP00000054168.9"/>
    <property type="gene ID" value="ENSMUSG00000017421.19"/>
</dbReference>
<dbReference type="Ensembl" id="ENSMUST00000165565.8">
    <molecule id="Q9JMD0-2"/>
    <property type="protein sequence ID" value="ENSMUSP00000132968.2"/>
    <property type="gene ID" value="ENSMUSG00000017421.19"/>
</dbReference>
<dbReference type="Ensembl" id="ENSMUST00000178665.8">
    <molecule id="Q9JMD0-3"/>
    <property type="protein sequence ID" value="ENSMUSP00000136727.2"/>
    <property type="gene ID" value="ENSMUSG00000017421.19"/>
</dbReference>
<dbReference type="Ensembl" id="ENSMUST00000188489.7">
    <molecule id="Q9JMD0-3"/>
    <property type="protein sequence ID" value="ENSMUSP00000139653.2"/>
    <property type="gene ID" value="ENSMUSG00000017421.19"/>
</dbReference>
<dbReference type="GeneID" id="22680"/>
<dbReference type="KEGG" id="mmu:22680"/>
<dbReference type="UCSC" id="uc007kly.2">
    <molecule id="Q9JMD0-4"/>
    <property type="organism name" value="mouse"/>
</dbReference>
<dbReference type="UCSC" id="uc007klz.2">
    <molecule id="Q9JMD0-1"/>
    <property type="organism name" value="mouse"/>
</dbReference>
<dbReference type="UCSC" id="uc007kma.2">
    <molecule id="Q9JMD0-3"/>
    <property type="organism name" value="mouse"/>
</dbReference>
<dbReference type="UCSC" id="uc007kmb.2">
    <molecule id="Q9JMD0-2"/>
    <property type="organism name" value="mouse"/>
</dbReference>
<dbReference type="AGR" id="MGI:1340045"/>
<dbReference type="CTD" id="22680"/>
<dbReference type="MGI" id="MGI:1340045">
    <property type="gene designation" value="Zfp207"/>
</dbReference>
<dbReference type="VEuPathDB" id="HostDB:ENSMUSG00000017421"/>
<dbReference type="eggNOG" id="KOG2893">
    <property type="taxonomic scope" value="Eukaryota"/>
</dbReference>
<dbReference type="GeneTree" id="ENSGT00730000111057"/>
<dbReference type="HOGENOM" id="CLU_037132_3_2_1"/>
<dbReference type="InParanoid" id="Q9JMD0"/>
<dbReference type="OMA" id="KQVLRPW"/>
<dbReference type="OrthoDB" id="1306014at2759"/>
<dbReference type="PhylomeDB" id="Q9JMD0"/>
<dbReference type="TreeFam" id="TF313844"/>
<dbReference type="BioGRID-ORCS" id="22680">
    <property type="hits" value="23 hits in 81 CRISPR screens"/>
</dbReference>
<dbReference type="CD-CODE" id="01CA17F3">
    <property type="entry name" value="Centrosome"/>
</dbReference>
<dbReference type="ChiTaRS" id="Zfp207">
    <property type="organism name" value="mouse"/>
</dbReference>
<dbReference type="PRO" id="PR:Q9JMD0"/>
<dbReference type="Proteomes" id="UP000000589">
    <property type="component" value="Chromosome 11"/>
</dbReference>
<dbReference type="RNAct" id="Q9JMD0">
    <property type="molecule type" value="protein"/>
</dbReference>
<dbReference type="Bgee" id="ENSMUSG00000017421">
    <property type="expression patterns" value="Expressed in undifferentiated genital tubercle and 268 other cell types or tissues"/>
</dbReference>
<dbReference type="ExpressionAtlas" id="Q9JMD0">
    <property type="expression patterns" value="baseline and differential"/>
</dbReference>
<dbReference type="GO" id="GO:0005737">
    <property type="term" value="C:cytoplasm"/>
    <property type="evidence" value="ECO:0007669"/>
    <property type="project" value="UniProtKB-KW"/>
</dbReference>
<dbReference type="GO" id="GO:0000776">
    <property type="term" value="C:kinetochore"/>
    <property type="evidence" value="ECO:0000250"/>
    <property type="project" value="UniProtKB"/>
</dbReference>
<dbReference type="GO" id="GO:0005874">
    <property type="term" value="C:microtubule"/>
    <property type="evidence" value="ECO:0007669"/>
    <property type="project" value="UniProtKB-KW"/>
</dbReference>
<dbReference type="GO" id="GO:0005730">
    <property type="term" value="C:nucleolus"/>
    <property type="evidence" value="ECO:0007669"/>
    <property type="project" value="Ensembl"/>
</dbReference>
<dbReference type="GO" id="GO:0005654">
    <property type="term" value="C:nucleoplasm"/>
    <property type="evidence" value="ECO:0007669"/>
    <property type="project" value="Ensembl"/>
</dbReference>
<dbReference type="GO" id="GO:0005634">
    <property type="term" value="C:nucleus"/>
    <property type="evidence" value="ECO:0000314"/>
    <property type="project" value="MGI"/>
</dbReference>
<dbReference type="GO" id="GO:0005819">
    <property type="term" value="C:spindle"/>
    <property type="evidence" value="ECO:0007669"/>
    <property type="project" value="UniProtKB-SubCell"/>
</dbReference>
<dbReference type="GO" id="GO:1990047">
    <property type="term" value="C:spindle matrix"/>
    <property type="evidence" value="ECO:0000250"/>
    <property type="project" value="UniProtKB"/>
</dbReference>
<dbReference type="GO" id="GO:0008201">
    <property type="term" value="F:heparin binding"/>
    <property type="evidence" value="ECO:0000314"/>
    <property type="project" value="MGI"/>
</dbReference>
<dbReference type="GO" id="GO:0008017">
    <property type="term" value="F:microtubule binding"/>
    <property type="evidence" value="ECO:0000314"/>
    <property type="project" value="UniProtKB"/>
</dbReference>
<dbReference type="GO" id="GO:0008270">
    <property type="term" value="F:zinc ion binding"/>
    <property type="evidence" value="ECO:0007669"/>
    <property type="project" value="UniProtKB-KW"/>
</dbReference>
<dbReference type="GO" id="GO:0008608">
    <property type="term" value="P:attachment of spindle microtubules to kinetochore"/>
    <property type="evidence" value="ECO:0000250"/>
    <property type="project" value="UniProtKB"/>
</dbReference>
<dbReference type="GO" id="GO:0051301">
    <property type="term" value="P:cell division"/>
    <property type="evidence" value="ECO:0007669"/>
    <property type="project" value="UniProtKB-KW"/>
</dbReference>
<dbReference type="GO" id="GO:0001578">
    <property type="term" value="P:microtubule bundle formation"/>
    <property type="evidence" value="ECO:0000250"/>
    <property type="project" value="UniProtKB"/>
</dbReference>
<dbReference type="GO" id="GO:0046785">
    <property type="term" value="P:microtubule polymerization"/>
    <property type="evidence" value="ECO:0000250"/>
    <property type="project" value="UniProtKB"/>
</dbReference>
<dbReference type="GO" id="GO:0000070">
    <property type="term" value="P:mitotic sister chromatid segregation"/>
    <property type="evidence" value="ECO:0000250"/>
    <property type="project" value="UniProtKB"/>
</dbReference>
<dbReference type="GO" id="GO:0090307">
    <property type="term" value="P:mitotic spindle assembly"/>
    <property type="evidence" value="ECO:0000314"/>
    <property type="project" value="UniProtKB"/>
</dbReference>
<dbReference type="GO" id="GO:0007094">
    <property type="term" value="P:mitotic spindle assembly checkpoint signaling"/>
    <property type="evidence" value="ECO:0000250"/>
    <property type="project" value="UniProtKB"/>
</dbReference>
<dbReference type="GO" id="GO:0050821">
    <property type="term" value="P:protein stabilization"/>
    <property type="evidence" value="ECO:0000250"/>
    <property type="project" value="UniProtKB"/>
</dbReference>
<dbReference type="GO" id="GO:0051983">
    <property type="term" value="P:regulation of chromosome segregation"/>
    <property type="evidence" value="ECO:0000250"/>
    <property type="project" value="UniProtKB"/>
</dbReference>
<dbReference type="CDD" id="cd20908">
    <property type="entry name" value="SUF4-like"/>
    <property type="match status" value="1"/>
</dbReference>
<dbReference type="InterPro" id="IPR013087">
    <property type="entry name" value="Znf_C2H2_type"/>
</dbReference>
<dbReference type="PANTHER" id="PTHR23215:SF0">
    <property type="entry name" value="BUB3-INTERACTING AND GLEBS MOTIF-CONTAINING PROTEIN ZNF207"/>
    <property type="match status" value="1"/>
</dbReference>
<dbReference type="PANTHER" id="PTHR23215">
    <property type="entry name" value="ZINC FINGER PROTEIN 207"/>
    <property type="match status" value="1"/>
</dbReference>
<dbReference type="PRINTS" id="PR01217">
    <property type="entry name" value="PRICHEXTENSN"/>
</dbReference>
<dbReference type="SMART" id="SM00355">
    <property type="entry name" value="ZnF_C2H2"/>
    <property type="match status" value="2"/>
</dbReference>
<dbReference type="PROSITE" id="PS00028">
    <property type="entry name" value="ZINC_FINGER_C2H2_1"/>
    <property type="match status" value="2"/>
</dbReference>
<organism>
    <name type="scientific">Mus musculus</name>
    <name type="common">Mouse</name>
    <dbReference type="NCBI Taxonomy" id="10090"/>
    <lineage>
        <taxon>Eukaryota</taxon>
        <taxon>Metazoa</taxon>
        <taxon>Chordata</taxon>
        <taxon>Craniata</taxon>
        <taxon>Vertebrata</taxon>
        <taxon>Euteleostomi</taxon>
        <taxon>Mammalia</taxon>
        <taxon>Eutheria</taxon>
        <taxon>Euarchontoglires</taxon>
        <taxon>Glires</taxon>
        <taxon>Rodentia</taxon>
        <taxon>Myomorpha</taxon>
        <taxon>Muroidea</taxon>
        <taxon>Muridae</taxon>
        <taxon>Murinae</taxon>
        <taxon>Mus</taxon>
        <taxon>Mus</taxon>
    </lineage>
</organism>
<name>ZN207_MOUSE</name>
<proteinExistence type="evidence at protein level"/>
<feature type="chain" id="PRO_0000428733" description="BUB3-interacting and GLEBS motif-containing protein ZNF207">
    <location>
        <begin position="1"/>
        <end position="495"/>
    </location>
</feature>
<feature type="zinc finger region" description="C2H2-type 1">
    <location>
        <begin position="11"/>
        <end position="34"/>
    </location>
</feature>
<feature type="zinc finger region" description="C2H2-type 2">
    <location>
        <begin position="35"/>
        <end position="58"/>
    </location>
</feature>
<feature type="region of interest" description="Microtubule-binding region" evidence="1">
    <location>
        <begin position="1"/>
        <end position="92"/>
    </location>
</feature>
<feature type="region of interest" description="Disordered" evidence="2">
    <location>
        <begin position="99"/>
        <end position="161"/>
    </location>
</feature>
<feature type="region of interest" description="Disordered" evidence="2">
    <location>
        <begin position="252"/>
        <end position="292"/>
    </location>
</feature>
<feature type="region of interest" description="Disordered" evidence="2">
    <location>
        <begin position="316"/>
        <end position="372"/>
    </location>
</feature>
<feature type="region of interest" description="GLEBS" evidence="1">
    <location>
        <begin position="376"/>
        <end position="408"/>
    </location>
</feature>
<feature type="region of interest" description="Disordered" evidence="2">
    <location>
        <begin position="462"/>
        <end position="495"/>
    </location>
</feature>
<feature type="compositionally biased region" description="Basic and acidic residues" evidence="2">
    <location>
        <begin position="99"/>
        <end position="111"/>
    </location>
</feature>
<feature type="compositionally biased region" description="Acidic residues" evidence="2">
    <location>
        <begin position="112"/>
        <end position="121"/>
    </location>
</feature>
<feature type="compositionally biased region" description="Polar residues" evidence="2">
    <location>
        <begin position="127"/>
        <end position="136"/>
    </location>
</feature>
<feature type="compositionally biased region" description="Pro residues" evidence="2">
    <location>
        <begin position="142"/>
        <end position="161"/>
    </location>
</feature>
<feature type="compositionally biased region" description="Low complexity" evidence="2">
    <location>
        <begin position="283"/>
        <end position="292"/>
    </location>
</feature>
<feature type="compositionally biased region" description="Low complexity" evidence="2">
    <location>
        <begin position="326"/>
        <end position="372"/>
    </location>
</feature>
<feature type="compositionally biased region" description="Pro residues" evidence="2">
    <location>
        <begin position="464"/>
        <end position="484"/>
    </location>
</feature>
<feature type="splice variant" id="VSP_054255" description="In isoform 2." evidence="8">
    <location>
        <begin position="185"/>
        <end position="200"/>
    </location>
</feature>
<feature type="splice variant" id="VSP_054256" description="In isoform 4." evidence="7">
    <location>
        <begin position="219"/>
        <end position="222"/>
    </location>
</feature>
<feature type="splice variant" id="VSP_054257" description="In isoform 3 and isoform 4." evidence="5 6 7">
    <location>
        <begin position="276"/>
        <end position="306"/>
    </location>
</feature>
<feature type="mutagenesis site" description="Abolishes interaction and stabilization of BUB3." evidence="3">
    <original>EE</original>
    <variation>AA</variation>
    <location>
        <begin position="390"/>
        <end position="391"/>
    </location>
</feature>